<feature type="chain" id="PRO_0000227039" description="DNA repair protein RecO">
    <location>
        <begin position="1"/>
        <end position="242"/>
    </location>
</feature>
<sequence length="242" mass="27438">MNLRSKVDSQPAYVLHSYPFRETSLIVEVFSRDFGRMALLARGARRPRSAIRGLLMAFQPLEIAWAGKGEVLTLMKAEWQGGLPLLAGEALFCGYYLNELLMHLLPREDAHEQLFASYAKMLALLAADPSGKVREADLRCFEKALLQELGYGLTLNHDSDANLIEPDTFYTYRIEQGPVRIDHGEGATQVVRGKTLLDLDAEDFSDPRTRHEAKALMRMLMAYYLAGKELETRKIFKELQEL</sequence>
<dbReference type="EMBL" id="CP000089">
    <property type="protein sequence ID" value="AAZ46776.1"/>
    <property type="molecule type" value="Genomic_DNA"/>
</dbReference>
<dbReference type="SMR" id="Q47EF5"/>
<dbReference type="STRING" id="159087.Daro_2031"/>
<dbReference type="KEGG" id="dar:Daro_2031"/>
<dbReference type="eggNOG" id="COG1381">
    <property type="taxonomic scope" value="Bacteria"/>
</dbReference>
<dbReference type="HOGENOM" id="CLU_066645_1_0_4"/>
<dbReference type="OrthoDB" id="9804792at2"/>
<dbReference type="GO" id="GO:0043590">
    <property type="term" value="C:bacterial nucleoid"/>
    <property type="evidence" value="ECO:0007669"/>
    <property type="project" value="TreeGrafter"/>
</dbReference>
<dbReference type="GO" id="GO:0006310">
    <property type="term" value="P:DNA recombination"/>
    <property type="evidence" value="ECO:0007669"/>
    <property type="project" value="UniProtKB-UniRule"/>
</dbReference>
<dbReference type="GO" id="GO:0006302">
    <property type="term" value="P:double-strand break repair"/>
    <property type="evidence" value="ECO:0007669"/>
    <property type="project" value="TreeGrafter"/>
</dbReference>
<dbReference type="Gene3D" id="2.40.50.140">
    <property type="entry name" value="Nucleic acid-binding proteins"/>
    <property type="match status" value="1"/>
</dbReference>
<dbReference type="Gene3D" id="1.20.1440.120">
    <property type="entry name" value="Recombination protein O, C-terminal domain"/>
    <property type="match status" value="1"/>
</dbReference>
<dbReference type="HAMAP" id="MF_00201">
    <property type="entry name" value="RecO"/>
    <property type="match status" value="1"/>
</dbReference>
<dbReference type="InterPro" id="IPR037278">
    <property type="entry name" value="ARFGAP/RecO"/>
</dbReference>
<dbReference type="InterPro" id="IPR022572">
    <property type="entry name" value="DNA_rep/recomb_RecO_N"/>
</dbReference>
<dbReference type="InterPro" id="IPR012340">
    <property type="entry name" value="NA-bd_OB-fold"/>
</dbReference>
<dbReference type="InterPro" id="IPR003717">
    <property type="entry name" value="RecO"/>
</dbReference>
<dbReference type="InterPro" id="IPR042242">
    <property type="entry name" value="RecO_C"/>
</dbReference>
<dbReference type="NCBIfam" id="TIGR00613">
    <property type="entry name" value="reco"/>
    <property type="match status" value="1"/>
</dbReference>
<dbReference type="PANTHER" id="PTHR33991">
    <property type="entry name" value="DNA REPAIR PROTEIN RECO"/>
    <property type="match status" value="1"/>
</dbReference>
<dbReference type="PANTHER" id="PTHR33991:SF1">
    <property type="entry name" value="DNA REPAIR PROTEIN RECO"/>
    <property type="match status" value="1"/>
</dbReference>
<dbReference type="Pfam" id="PF02565">
    <property type="entry name" value="RecO_C"/>
    <property type="match status" value="1"/>
</dbReference>
<dbReference type="Pfam" id="PF11967">
    <property type="entry name" value="RecO_N"/>
    <property type="match status" value="1"/>
</dbReference>
<dbReference type="SUPFAM" id="SSF57863">
    <property type="entry name" value="ArfGap/RecO-like zinc finger"/>
    <property type="match status" value="1"/>
</dbReference>
<dbReference type="SUPFAM" id="SSF50249">
    <property type="entry name" value="Nucleic acid-binding proteins"/>
    <property type="match status" value="1"/>
</dbReference>
<proteinExistence type="inferred from homology"/>
<evidence type="ECO:0000255" key="1">
    <source>
        <dbReference type="HAMAP-Rule" id="MF_00201"/>
    </source>
</evidence>
<accession>Q47EF5</accession>
<protein>
    <recommendedName>
        <fullName evidence="1">DNA repair protein RecO</fullName>
    </recommendedName>
    <alternativeName>
        <fullName evidence="1">Recombination protein O</fullName>
    </alternativeName>
</protein>
<comment type="function">
    <text evidence="1">Involved in DNA repair and RecF pathway recombination.</text>
</comment>
<comment type="similarity">
    <text evidence="1">Belongs to the RecO family.</text>
</comment>
<reference key="1">
    <citation type="journal article" date="2009" name="BMC Genomics">
        <title>Metabolic analysis of the soil microbe Dechloromonas aromatica str. RCB: indications of a surprisingly complex life-style and cryptic anaerobic pathways for aromatic degradation.</title>
        <authorList>
            <person name="Salinero K.K."/>
            <person name="Keller K."/>
            <person name="Feil W.S."/>
            <person name="Feil H."/>
            <person name="Trong S."/>
            <person name="Di Bartolo G."/>
            <person name="Lapidus A."/>
        </authorList>
    </citation>
    <scope>NUCLEOTIDE SEQUENCE [LARGE SCALE GENOMIC DNA]</scope>
    <source>
        <strain>RCB</strain>
    </source>
</reference>
<gene>
    <name evidence="1" type="primary">recO</name>
    <name type="ordered locus">Daro_2031</name>
</gene>
<keyword id="KW-0227">DNA damage</keyword>
<keyword id="KW-0233">DNA recombination</keyword>
<keyword id="KW-0234">DNA repair</keyword>
<name>RECO_DECAR</name>
<organism>
    <name type="scientific">Dechloromonas aromatica (strain RCB)</name>
    <dbReference type="NCBI Taxonomy" id="159087"/>
    <lineage>
        <taxon>Bacteria</taxon>
        <taxon>Pseudomonadati</taxon>
        <taxon>Pseudomonadota</taxon>
        <taxon>Betaproteobacteria</taxon>
        <taxon>Rhodocyclales</taxon>
        <taxon>Azonexaceae</taxon>
        <taxon>Dechloromonas</taxon>
    </lineage>
</organism>